<proteinExistence type="evidence at transcript level"/>
<gene>
    <name type="primary">TCTP</name>
</gene>
<accession>Q6DUX3</accession>
<name>TCTP_SOLLC</name>
<organism>
    <name type="scientific">Solanum lycopersicum</name>
    <name type="common">Tomato</name>
    <name type="synonym">Lycopersicon esculentum</name>
    <dbReference type="NCBI Taxonomy" id="4081"/>
    <lineage>
        <taxon>Eukaryota</taxon>
        <taxon>Viridiplantae</taxon>
        <taxon>Streptophyta</taxon>
        <taxon>Embryophyta</taxon>
        <taxon>Tracheophyta</taxon>
        <taxon>Spermatophyta</taxon>
        <taxon>Magnoliopsida</taxon>
        <taxon>eudicotyledons</taxon>
        <taxon>Gunneridae</taxon>
        <taxon>Pentapetalae</taxon>
        <taxon>asterids</taxon>
        <taxon>lamiids</taxon>
        <taxon>Solanales</taxon>
        <taxon>Solanaceae</taxon>
        <taxon>Solanoideae</taxon>
        <taxon>Solaneae</taxon>
        <taxon>Solanum</taxon>
        <taxon>Solanum subgen. Lycopersicon</taxon>
    </lineage>
</organism>
<comment type="function">
    <text evidence="1">Involved in calcium binding and microtubule stabilization.</text>
</comment>
<comment type="subcellular location">
    <subcellularLocation>
        <location evidence="1">Cytoplasm</location>
    </subcellularLocation>
</comment>
<comment type="similarity">
    <text evidence="2">Belongs to the TCTP family.</text>
</comment>
<evidence type="ECO:0000250" key="1"/>
<evidence type="ECO:0000255" key="2">
    <source>
        <dbReference type="PROSITE-ProRule" id="PRU01133"/>
    </source>
</evidence>
<dbReference type="EMBL" id="AY642284">
    <property type="protein sequence ID" value="AAT65968.1"/>
    <property type="molecule type" value="mRNA"/>
</dbReference>
<dbReference type="SMR" id="Q6DUX3"/>
<dbReference type="FunCoup" id="Q6DUX3">
    <property type="interactions" value="2634"/>
</dbReference>
<dbReference type="STRING" id="4081.Q6DUX3"/>
<dbReference type="PaxDb" id="4081-Solyc01g099770.2.1"/>
<dbReference type="eggNOG" id="KOG1727">
    <property type="taxonomic scope" value="Eukaryota"/>
</dbReference>
<dbReference type="InParanoid" id="Q6DUX3"/>
<dbReference type="Proteomes" id="UP000004994">
    <property type="component" value="Unplaced"/>
</dbReference>
<dbReference type="ExpressionAtlas" id="Q6DUX3">
    <property type="expression patterns" value="baseline and differential"/>
</dbReference>
<dbReference type="GO" id="GO:0005737">
    <property type="term" value="C:cytoplasm"/>
    <property type="evidence" value="ECO:0000318"/>
    <property type="project" value="GO_Central"/>
</dbReference>
<dbReference type="GO" id="GO:0005509">
    <property type="term" value="F:calcium ion binding"/>
    <property type="evidence" value="ECO:0000318"/>
    <property type="project" value="GO_Central"/>
</dbReference>
<dbReference type="FunFam" id="2.170.150.10:FF:000003">
    <property type="entry name" value="Translationally-controlled tumor protein homolog"/>
    <property type="match status" value="1"/>
</dbReference>
<dbReference type="Gene3D" id="2.170.150.10">
    <property type="entry name" value="Metal Binding Protein, Guanine Nucleotide Exchange Factor, Chain A"/>
    <property type="match status" value="1"/>
</dbReference>
<dbReference type="InterPro" id="IPR011057">
    <property type="entry name" value="Mss4-like_sf"/>
</dbReference>
<dbReference type="InterPro" id="IPR011323">
    <property type="entry name" value="Mss4/transl-control_tumour"/>
</dbReference>
<dbReference type="InterPro" id="IPR034737">
    <property type="entry name" value="TCTP"/>
</dbReference>
<dbReference type="InterPro" id="IPR018103">
    <property type="entry name" value="Translation_control_tumour_CS"/>
</dbReference>
<dbReference type="InterPro" id="IPR018105">
    <property type="entry name" value="Translational_control_tumour_p"/>
</dbReference>
<dbReference type="PANTHER" id="PTHR11991">
    <property type="entry name" value="TRANSLATIONALLY CONTROLLED TUMOR PROTEIN-RELATED"/>
    <property type="match status" value="1"/>
</dbReference>
<dbReference type="PANTHER" id="PTHR11991:SF0">
    <property type="entry name" value="TRANSLATIONALLY-CONTROLLED TUMOR PROTEIN"/>
    <property type="match status" value="1"/>
</dbReference>
<dbReference type="Pfam" id="PF00838">
    <property type="entry name" value="TCTP"/>
    <property type="match status" value="1"/>
</dbReference>
<dbReference type="PRINTS" id="PR01653">
    <property type="entry name" value="TCTPROTEIN"/>
</dbReference>
<dbReference type="SUPFAM" id="SSF51316">
    <property type="entry name" value="Mss4-like"/>
    <property type="match status" value="1"/>
</dbReference>
<dbReference type="PROSITE" id="PS01003">
    <property type="entry name" value="TCTP_2"/>
    <property type="match status" value="1"/>
</dbReference>
<dbReference type="PROSITE" id="PS51797">
    <property type="entry name" value="TCTP_3"/>
    <property type="match status" value="1"/>
</dbReference>
<keyword id="KW-0106">Calcium</keyword>
<keyword id="KW-0963">Cytoplasm</keyword>
<keyword id="KW-1185">Reference proteome</keyword>
<sequence length="168" mass="18908">MLVYQDLLTGDELLSDSFPYKEVENGVLWEVQGKWVVQGAVDVNIGANPSAEGGCEDEGVDDQAVRVVDIVDTFRLQEQPAFDKKQFVTFMKRYIKNLTPKLEGETQEAFKKNIEAATKFLLQKIKDLQFFVGESMHDDGALVFAYYKEGSADPPFLYIAPGLKEIKC</sequence>
<reference key="1">
    <citation type="submission" date="2004-06" db="EMBL/GenBank/DDBJ databases">
        <title>Generation of full-length cDNA clones from tomato roots.</title>
        <authorList>
            <person name="Wang C.K."/>
            <person name="Chen P.Y."/>
            <person name="To K.Y."/>
        </authorList>
    </citation>
    <scope>NUCLEOTIDE SEQUENCE [MRNA]</scope>
    <source>
        <strain>cv. CL5915</strain>
        <tissue>Root</tissue>
    </source>
</reference>
<protein>
    <recommendedName>
        <fullName>Translationally-controlled tumor protein homolog</fullName>
        <shortName>TCTP</shortName>
    </recommendedName>
</protein>
<feature type="chain" id="PRO_0000252314" description="Translationally-controlled tumor protein homolog">
    <location>
        <begin position="1"/>
        <end position="168"/>
    </location>
</feature>
<feature type="domain" description="TCTP" evidence="2">
    <location>
        <begin position="1"/>
        <end position="168"/>
    </location>
</feature>